<accession>Q48JS0</accession>
<gene>
    <name evidence="1" type="primary">rplT</name>
    <name type="ordered locus">PSPPH_2138</name>
</gene>
<protein>
    <recommendedName>
        <fullName evidence="1">Large ribosomal subunit protein bL20</fullName>
    </recommendedName>
    <alternativeName>
        <fullName evidence="2">50S ribosomal protein L20</fullName>
    </alternativeName>
</protein>
<organism>
    <name type="scientific">Pseudomonas savastanoi pv. phaseolicola (strain 1448A / Race 6)</name>
    <name type="common">Pseudomonas syringae pv. phaseolicola (strain 1448A / Race 6)</name>
    <dbReference type="NCBI Taxonomy" id="264730"/>
    <lineage>
        <taxon>Bacteria</taxon>
        <taxon>Pseudomonadati</taxon>
        <taxon>Pseudomonadota</taxon>
        <taxon>Gammaproteobacteria</taxon>
        <taxon>Pseudomonadales</taxon>
        <taxon>Pseudomonadaceae</taxon>
        <taxon>Pseudomonas</taxon>
    </lineage>
</organism>
<evidence type="ECO:0000255" key="1">
    <source>
        <dbReference type="HAMAP-Rule" id="MF_00382"/>
    </source>
</evidence>
<evidence type="ECO:0000305" key="2"/>
<sequence length="118" mass="13314">MARVKRGVIARKRHKKILKLAKGYYGARSRVFRVAKQAVIKAGQYAYRDRRQKKRQFRALWIARINAGARVNGLSYSRFIAGLKKASIEIDRKVLADLAVNEKAAFAAIVEKAKATLA</sequence>
<feature type="chain" id="PRO_0000243717" description="Large ribosomal subunit protein bL20">
    <location>
        <begin position="1"/>
        <end position="118"/>
    </location>
</feature>
<name>RL20_PSE14</name>
<dbReference type="EMBL" id="CP000058">
    <property type="protein sequence ID" value="AAZ35350.1"/>
    <property type="molecule type" value="Genomic_DNA"/>
</dbReference>
<dbReference type="RefSeq" id="WP_002553161.1">
    <property type="nucleotide sequence ID" value="NC_005773.3"/>
</dbReference>
<dbReference type="SMR" id="Q48JS0"/>
<dbReference type="GeneID" id="98112258"/>
<dbReference type="KEGG" id="psp:PSPPH_2138"/>
<dbReference type="eggNOG" id="COG0292">
    <property type="taxonomic scope" value="Bacteria"/>
</dbReference>
<dbReference type="HOGENOM" id="CLU_123265_0_1_6"/>
<dbReference type="Proteomes" id="UP000000551">
    <property type="component" value="Chromosome"/>
</dbReference>
<dbReference type="GO" id="GO:1990904">
    <property type="term" value="C:ribonucleoprotein complex"/>
    <property type="evidence" value="ECO:0007669"/>
    <property type="project" value="UniProtKB-KW"/>
</dbReference>
<dbReference type="GO" id="GO:0005840">
    <property type="term" value="C:ribosome"/>
    <property type="evidence" value="ECO:0007669"/>
    <property type="project" value="UniProtKB-KW"/>
</dbReference>
<dbReference type="GO" id="GO:0019843">
    <property type="term" value="F:rRNA binding"/>
    <property type="evidence" value="ECO:0007669"/>
    <property type="project" value="UniProtKB-UniRule"/>
</dbReference>
<dbReference type="GO" id="GO:0003735">
    <property type="term" value="F:structural constituent of ribosome"/>
    <property type="evidence" value="ECO:0007669"/>
    <property type="project" value="InterPro"/>
</dbReference>
<dbReference type="GO" id="GO:0000027">
    <property type="term" value="P:ribosomal large subunit assembly"/>
    <property type="evidence" value="ECO:0007669"/>
    <property type="project" value="UniProtKB-UniRule"/>
</dbReference>
<dbReference type="GO" id="GO:0006412">
    <property type="term" value="P:translation"/>
    <property type="evidence" value="ECO:0007669"/>
    <property type="project" value="InterPro"/>
</dbReference>
<dbReference type="CDD" id="cd07026">
    <property type="entry name" value="Ribosomal_L20"/>
    <property type="match status" value="1"/>
</dbReference>
<dbReference type="FunFam" id="1.10.1900.20:FF:000001">
    <property type="entry name" value="50S ribosomal protein L20"/>
    <property type="match status" value="1"/>
</dbReference>
<dbReference type="Gene3D" id="6.10.160.10">
    <property type="match status" value="1"/>
</dbReference>
<dbReference type="Gene3D" id="1.10.1900.20">
    <property type="entry name" value="Ribosomal protein L20"/>
    <property type="match status" value="1"/>
</dbReference>
<dbReference type="HAMAP" id="MF_00382">
    <property type="entry name" value="Ribosomal_bL20"/>
    <property type="match status" value="1"/>
</dbReference>
<dbReference type="InterPro" id="IPR005813">
    <property type="entry name" value="Ribosomal_bL20"/>
</dbReference>
<dbReference type="InterPro" id="IPR049946">
    <property type="entry name" value="RIBOSOMAL_L20_CS"/>
</dbReference>
<dbReference type="InterPro" id="IPR035566">
    <property type="entry name" value="Ribosomal_protein_bL20_C"/>
</dbReference>
<dbReference type="NCBIfam" id="TIGR01032">
    <property type="entry name" value="rplT_bact"/>
    <property type="match status" value="1"/>
</dbReference>
<dbReference type="PANTHER" id="PTHR10986">
    <property type="entry name" value="39S RIBOSOMAL PROTEIN L20"/>
    <property type="match status" value="1"/>
</dbReference>
<dbReference type="Pfam" id="PF00453">
    <property type="entry name" value="Ribosomal_L20"/>
    <property type="match status" value="1"/>
</dbReference>
<dbReference type="PRINTS" id="PR00062">
    <property type="entry name" value="RIBOSOMALL20"/>
</dbReference>
<dbReference type="SUPFAM" id="SSF74731">
    <property type="entry name" value="Ribosomal protein L20"/>
    <property type="match status" value="1"/>
</dbReference>
<dbReference type="PROSITE" id="PS00937">
    <property type="entry name" value="RIBOSOMAL_L20"/>
    <property type="match status" value="1"/>
</dbReference>
<keyword id="KW-0687">Ribonucleoprotein</keyword>
<keyword id="KW-0689">Ribosomal protein</keyword>
<keyword id="KW-0694">RNA-binding</keyword>
<keyword id="KW-0699">rRNA-binding</keyword>
<reference key="1">
    <citation type="journal article" date="2005" name="J. Bacteriol.">
        <title>Whole-genome sequence analysis of Pseudomonas syringae pv. phaseolicola 1448A reveals divergence among pathovars in genes involved in virulence and transposition.</title>
        <authorList>
            <person name="Joardar V."/>
            <person name="Lindeberg M."/>
            <person name="Jackson R.W."/>
            <person name="Selengut J."/>
            <person name="Dodson R."/>
            <person name="Brinkac L.M."/>
            <person name="Daugherty S.C."/>
            <person name="DeBoy R.T."/>
            <person name="Durkin A.S."/>
            <person name="Gwinn Giglio M."/>
            <person name="Madupu R."/>
            <person name="Nelson W.C."/>
            <person name="Rosovitz M.J."/>
            <person name="Sullivan S.A."/>
            <person name="Crabtree J."/>
            <person name="Creasy T."/>
            <person name="Davidsen T.M."/>
            <person name="Haft D.H."/>
            <person name="Zafar N."/>
            <person name="Zhou L."/>
            <person name="Halpin R."/>
            <person name="Holley T."/>
            <person name="Khouri H.M."/>
            <person name="Feldblyum T.V."/>
            <person name="White O."/>
            <person name="Fraser C.M."/>
            <person name="Chatterjee A.K."/>
            <person name="Cartinhour S."/>
            <person name="Schneider D."/>
            <person name="Mansfield J.W."/>
            <person name="Collmer A."/>
            <person name="Buell R."/>
        </authorList>
    </citation>
    <scope>NUCLEOTIDE SEQUENCE [LARGE SCALE GENOMIC DNA]</scope>
    <source>
        <strain>1448A / Race 6</strain>
    </source>
</reference>
<proteinExistence type="inferred from homology"/>
<comment type="function">
    <text evidence="1">Binds directly to 23S ribosomal RNA and is necessary for the in vitro assembly process of the 50S ribosomal subunit. It is not involved in the protein synthesizing functions of that subunit.</text>
</comment>
<comment type="similarity">
    <text evidence="1">Belongs to the bacterial ribosomal protein bL20 family.</text>
</comment>